<proteinExistence type="inferred from homology"/>
<accession>A8H0M7</accession>
<evidence type="ECO:0000255" key="1">
    <source>
        <dbReference type="HAMAP-Rule" id="MF_00086"/>
    </source>
</evidence>
<comment type="function">
    <text evidence="1">Catalyzes the formation of S-adenosylmethionine (AdoMet) from methionine and ATP. The overall synthetic reaction is composed of two sequential steps, AdoMet formation and the subsequent tripolyphosphate hydrolysis which occurs prior to release of AdoMet from the enzyme.</text>
</comment>
<comment type="catalytic activity">
    <reaction evidence="1">
        <text>L-methionine + ATP + H2O = S-adenosyl-L-methionine + phosphate + diphosphate</text>
        <dbReference type="Rhea" id="RHEA:21080"/>
        <dbReference type="ChEBI" id="CHEBI:15377"/>
        <dbReference type="ChEBI" id="CHEBI:30616"/>
        <dbReference type="ChEBI" id="CHEBI:33019"/>
        <dbReference type="ChEBI" id="CHEBI:43474"/>
        <dbReference type="ChEBI" id="CHEBI:57844"/>
        <dbReference type="ChEBI" id="CHEBI:59789"/>
        <dbReference type="EC" id="2.5.1.6"/>
    </reaction>
</comment>
<comment type="cofactor">
    <cofactor evidence="1">
        <name>Mg(2+)</name>
        <dbReference type="ChEBI" id="CHEBI:18420"/>
    </cofactor>
    <text evidence="1">Binds 2 divalent ions per subunit.</text>
</comment>
<comment type="cofactor">
    <cofactor evidence="1">
        <name>K(+)</name>
        <dbReference type="ChEBI" id="CHEBI:29103"/>
    </cofactor>
    <text evidence="1">Binds 1 potassium ion per subunit.</text>
</comment>
<comment type="pathway">
    <text evidence="1">Amino-acid biosynthesis; S-adenosyl-L-methionine biosynthesis; S-adenosyl-L-methionine from L-methionine: step 1/1.</text>
</comment>
<comment type="subunit">
    <text evidence="1">Homotetramer; dimer of dimers.</text>
</comment>
<comment type="subcellular location">
    <subcellularLocation>
        <location evidence="1">Cytoplasm</location>
    </subcellularLocation>
</comment>
<comment type="similarity">
    <text evidence="1">Belongs to the AdoMet synthase family.</text>
</comment>
<keyword id="KW-0067">ATP-binding</keyword>
<keyword id="KW-0963">Cytoplasm</keyword>
<keyword id="KW-0460">Magnesium</keyword>
<keyword id="KW-0479">Metal-binding</keyword>
<keyword id="KW-0547">Nucleotide-binding</keyword>
<keyword id="KW-0554">One-carbon metabolism</keyword>
<keyword id="KW-0630">Potassium</keyword>
<keyword id="KW-1185">Reference proteome</keyword>
<keyword id="KW-0808">Transferase</keyword>
<reference key="1">
    <citation type="submission" date="2007-10" db="EMBL/GenBank/DDBJ databases">
        <title>Complete sequence of Shewanella pealeana ATCC 700345.</title>
        <authorList>
            <consortium name="US DOE Joint Genome Institute"/>
            <person name="Copeland A."/>
            <person name="Lucas S."/>
            <person name="Lapidus A."/>
            <person name="Barry K."/>
            <person name="Glavina del Rio T."/>
            <person name="Dalin E."/>
            <person name="Tice H."/>
            <person name="Pitluck S."/>
            <person name="Chertkov O."/>
            <person name="Brettin T."/>
            <person name="Bruce D."/>
            <person name="Detter J.C."/>
            <person name="Han C."/>
            <person name="Schmutz J."/>
            <person name="Larimer F."/>
            <person name="Land M."/>
            <person name="Hauser L."/>
            <person name="Kyrpides N."/>
            <person name="Kim E."/>
            <person name="Zhao J.-S.Z."/>
            <person name="Manno D."/>
            <person name="Hawari J."/>
            <person name="Richardson P."/>
        </authorList>
    </citation>
    <scope>NUCLEOTIDE SEQUENCE [LARGE SCALE GENOMIC DNA]</scope>
    <source>
        <strain>ATCC 700345 / ANG-SQ1</strain>
    </source>
</reference>
<protein>
    <recommendedName>
        <fullName evidence="1">S-adenosylmethionine synthase</fullName>
        <shortName evidence="1">AdoMet synthase</shortName>
        <ecNumber evidence="1">2.5.1.6</ecNumber>
    </recommendedName>
    <alternativeName>
        <fullName evidence="1">MAT</fullName>
    </alternativeName>
    <alternativeName>
        <fullName evidence="1">Methionine adenosyltransferase</fullName>
    </alternativeName>
</protein>
<dbReference type="EC" id="2.5.1.6" evidence="1"/>
<dbReference type="EMBL" id="CP000851">
    <property type="protein sequence ID" value="ABV86114.1"/>
    <property type="molecule type" value="Genomic_DNA"/>
</dbReference>
<dbReference type="RefSeq" id="WP_012154050.1">
    <property type="nucleotide sequence ID" value="NC_009901.1"/>
</dbReference>
<dbReference type="SMR" id="A8H0M7"/>
<dbReference type="STRING" id="398579.Spea_0787"/>
<dbReference type="KEGG" id="spl:Spea_0787"/>
<dbReference type="eggNOG" id="COG0192">
    <property type="taxonomic scope" value="Bacteria"/>
</dbReference>
<dbReference type="HOGENOM" id="CLU_041802_1_1_6"/>
<dbReference type="OrthoDB" id="9801686at2"/>
<dbReference type="UniPathway" id="UPA00315">
    <property type="reaction ID" value="UER00080"/>
</dbReference>
<dbReference type="Proteomes" id="UP000002608">
    <property type="component" value="Chromosome"/>
</dbReference>
<dbReference type="GO" id="GO:0005737">
    <property type="term" value="C:cytoplasm"/>
    <property type="evidence" value="ECO:0007669"/>
    <property type="project" value="UniProtKB-SubCell"/>
</dbReference>
<dbReference type="GO" id="GO:0005524">
    <property type="term" value="F:ATP binding"/>
    <property type="evidence" value="ECO:0007669"/>
    <property type="project" value="UniProtKB-UniRule"/>
</dbReference>
<dbReference type="GO" id="GO:0000287">
    <property type="term" value="F:magnesium ion binding"/>
    <property type="evidence" value="ECO:0007669"/>
    <property type="project" value="UniProtKB-UniRule"/>
</dbReference>
<dbReference type="GO" id="GO:0004478">
    <property type="term" value="F:methionine adenosyltransferase activity"/>
    <property type="evidence" value="ECO:0007669"/>
    <property type="project" value="UniProtKB-UniRule"/>
</dbReference>
<dbReference type="GO" id="GO:0006730">
    <property type="term" value="P:one-carbon metabolic process"/>
    <property type="evidence" value="ECO:0007669"/>
    <property type="project" value="UniProtKB-KW"/>
</dbReference>
<dbReference type="GO" id="GO:0006556">
    <property type="term" value="P:S-adenosylmethionine biosynthetic process"/>
    <property type="evidence" value="ECO:0007669"/>
    <property type="project" value="UniProtKB-UniRule"/>
</dbReference>
<dbReference type="CDD" id="cd18079">
    <property type="entry name" value="S-AdoMet_synt"/>
    <property type="match status" value="1"/>
</dbReference>
<dbReference type="FunFam" id="3.30.300.10:FF:000001">
    <property type="entry name" value="S-adenosylmethionine synthase"/>
    <property type="match status" value="1"/>
</dbReference>
<dbReference type="FunFam" id="3.30.300.10:FF:000003">
    <property type="entry name" value="S-adenosylmethionine synthase"/>
    <property type="match status" value="1"/>
</dbReference>
<dbReference type="FunFam" id="3.30.300.10:FF:000004">
    <property type="entry name" value="S-adenosylmethionine synthase"/>
    <property type="match status" value="1"/>
</dbReference>
<dbReference type="Gene3D" id="3.30.300.10">
    <property type="match status" value="3"/>
</dbReference>
<dbReference type="HAMAP" id="MF_00086">
    <property type="entry name" value="S_AdoMet_synth1"/>
    <property type="match status" value="1"/>
</dbReference>
<dbReference type="InterPro" id="IPR022631">
    <property type="entry name" value="ADOMET_SYNTHASE_CS"/>
</dbReference>
<dbReference type="InterPro" id="IPR022630">
    <property type="entry name" value="S-AdoMet_synt_C"/>
</dbReference>
<dbReference type="InterPro" id="IPR022629">
    <property type="entry name" value="S-AdoMet_synt_central"/>
</dbReference>
<dbReference type="InterPro" id="IPR022628">
    <property type="entry name" value="S-AdoMet_synt_N"/>
</dbReference>
<dbReference type="InterPro" id="IPR002133">
    <property type="entry name" value="S-AdoMet_synthetase"/>
</dbReference>
<dbReference type="InterPro" id="IPR022636">
    <property type="entry name" value="S-AdoMet_synthetase_sfam"/>
</dbReference>
<dbReference type="NCBIfam" id="TIGR01034">
    <property type="entry name" value="metK"/>
    <property type="match status" value="1"/>
</dbReference>
<dbReference type="PANTHER" id="PTHR11964">
    <property type="entry name" value="S-ADENOSYLMETHIONINE SYNTHETASE"/>
    <property type="match status" value="1"/>
</dbReference>
<dbReference type="Pfam" id="PF02773">
    <property type="entry name" value="S-AdoMet_synt_C"/>
    <property type="match status" value="1"/>
</dbReference>
<dbReference type="Pfam" id="PF02772">
    <property type="entry name" value="S-AdoMet_synt_M"/>
    <property type="match status" value="1"/>
</dbReference>
<dbReference type="Pfam" id="PF00438">
    <property type="entry name" value="S-AdoMet_synt_N"/>
    <property type="match status" value="1"/>
</dbReference>
<dbReference type="PIRSF" id="PIRSF000497">
    <property type="entry name" value="MAT"/>
    <property type="match status" value="1"/>
</dbReference>
<dbReference type="SUPFAM" id="SSF55973">
    <property type="entry name" value="S-adenosylmethionine synthetase"/>
    <property type="match status" value="3"/>
</dbReference>
<dbReference type="PROSITE" id="PS00376">
    <property type="entry name" value="ADOMET_SYNTHASE_1"/>
    <property type="match status" value="1"/>
</dbReference>
<dbReference type="PROSITE" id="PS00377">
    <property type="entry name" value="ADOMET_SYNTHASE_2"/>
    <property type="match status" value="1"/>
</dbReference>
<feature type="chain" id="PRO_1000075394" description="S-adenosylmethionine synthase">
    <location>
        <begin position="1"/>
        <end position="384"/>
    </location>
</feature>
<feature type="region of interest" description="Flexible loop" evidence="1">
    <location>
        <begin position="99"/>
        <end position="109"/>
    </location>
</feature>
<feature type="binding site" description="in other chain" evidence="1">
    <location>
        <position position="15"/>
    </location>
    <ligand>
        <name>ATP</name>
        <dbReference type="ChEBI" id="CHEBI:30616"/>
        <note>ligand shared between two neighboring subunits</note>
    </ligand>
</feature>
<feature type="binding site" evidence="1">
    <location>
        <position position="17"/>
    </location>
    <ligand>
        <name>Mg(2+)</name>
        <dbReference type="ChEBI" id="CHEBI:18420"/>
    </ligand>
</feature>
<feature type="binding site" evidence="1">
    <location>
        <position position="43"/>
    </location>
    <ligand>
        <name>K(+)</name>
        <dbReference type="ChEBI" id="CHEBI:29103"/>
    </ligand>
</feature>
<feature type="binding site" description="in other chain" evidence="1">
    <location>
        <position position="56"/>
    </location>
    <ligand>
        <name>L-methionine</name>
        <dbReference type="ChEBI" id="CHEBI:57844"/>
        <note>ligand shared between two neighboring subunits</note>
    </ligand>
</feature>
<feature type="binding site" description="in other chain" evidence="1">
    <location>
        <position position="99"/>
    </location>
    <ligand>
        <name>L-methionine</name>
        <dbReference type="ChEBI" id="CHEBI:57844"/>
        <note>ligand shared between two neighboring subunits</note>
    </ligand>
</feature>
<feature type="binding site" description="in other chain" evidence="1">
    <location>
        <begin position="164"/>
        <end position="166"/>
    </location>
    <ligand>
        <name>ATP</name>
        <dbReference type="ChEBI" id="CHEBI:30616"/>
        <note>ligand shared between two neighboring subunits</note>
    </ligand>
</feature>
<feature type="binding site" description="in other chain" evidence="1">
    <location>
        <begin position="231"/>
        <end position="232"/>
    </location>
    <ligand>
        <name>ATP</name>
        <dbReference type="ChEBI" id="CHEBI:30616"/>
        <note>ligand shared between two neighboring subunits</note>
    </ligand>
</feature>
<feature type="binding site" evidence="1">
    <location>
        <position position="240"/>
    </location>
    <ligand>
        <name>ATP</name>
        <dbReference type="ChEBI" id="CHEBI:30616"/>
        <note>ligand shared between two neighboring subunits</note>
    </ligand>
</feature>
<feature type="binding site" evidence="1">
    <location>
        <position position="240"/>
    </location>
    <ligand>
        <name>L-methionine</name>
        <dbReference type="ChEBI" id="CHEBI:57844"/>
        <note>ligand shared between two neighboring subunits</note>
    </ligand>
</feature>
<feature type="binding site" description="in other chain" evidence="1">
    <location>
        <begin position="246"/>
        <end position="247"/>
    </location>
    <ligand>
        <name>ATP</name>
        <dbReference type="ChEBI" id="CHEBI:30616"/>
        <note>ligand shared between two neighboring subunits</note>
    </ligand>
</feature>
<feature type="binding site" evidence="1">
    <location>
        <position position="263"/>
    </location>
    <ligand>
        <name>ATP</name>
        <dbReference type="ChEBI" id="CHEBI:30616"/>
        <note>ligand shared between two neighboring subunits</note>
    </ligand>
</feature>
<feature type="binding site" evidence="1">
    <location>
        <position position="267"/>
    </location>
    <ligand>
        <name>ATP</name>
        <dbReference type="ChEBI" id="CHEBI:30616"/>
        <note>ligand shared between two neighboring subunits</note>
    </ligand>
</feature>
<feature type="binding site" description="in other chain" evidence="1">
    <location>
        <position position="271"/>
    </location>
    <ligand>
        <name>L-methionine</name>
        <dbReference type="ChEBI" id="CHEBI:57844"/>
        <note>ligand shared between two neighboring subunits</note>
    </ligand>
</feature>
<sequence>MAKHLFTSESVSEGHPDKIADQISDAVLDAILEQDPKARVACETYVKTGMVMVGGEVTTSAWVDIEEITRKTVRDIGYTHSDMGFDADSCAILNVIGKQSPDINQGVDRADPKEQGAGDQGLMFGYANNETDVLMPAPITYSHKLVKRQSEVRKDKTLPWLRPDAKSQVTFAYNSDGSIAGIDAVVLSTQHSEDVTQADLIEGVMETIIKPVLPAKWLSKDTKYFINPTGRFVIGGPVGDCGLTGRKIIVDTYGGMARHGGGAFSGKDPSKVDRSAAYAARYVAKNIVAAGLADRCEIQVSYAIGVAEPTSISIETFGTAKVGEELLIDLVRRHFDLRPYGLTEMLNLARPIYQATAAYGHFGRNEFPWEATDKVDALRADAGL</sequence>
<gene>
    <name evidence="1" type="primary">metK</name>
    <name type="ordered locus">Spea_0787</name>
</gene>
<organism>
    <name type="scientific">Shewanella pealeana (strain ATCC 700345 / ANG-SQ1)</name>
    <dbReference type="NCBI Taxonomy" id="398579"/>
    <lineage>
        <taxon>Bacteria</taxon>
        <taxon>Pseudomonadati</taxon>
        <taxon>Pseudomonadota</taxon>
        <taxon>Gammaproteobacteria</taxon>
        <taxon>Alteromonadales</taxon>
        <taxon>Shewanellaceae</taxon>
        <taxon>Shewanella</taxon>
    </lineage>
</organism>
<name>METK_SHEPA</name>